<reference key="1">
    <citation type="journal article" date="1996" name="Nucleic Acids Res.">
        <title>Complete sequence analysis of the genome of the bacterium Mycoplasma pneumoniae.</title>
        <authorList>
            <person name="Himmelreich R."/>
            <person name="Hilbert H."/>
            <person name="Plagens H."/>
            <person name="Pirkl E."/>
            <person name="Li B.-C."/>
            <person name="Herrmann R."/>
        </authorList>
    </citation>
    <scope>NUCLEOTIDE SEQUENCE [LARGE SCALE GENOMIC DNA]</scope>
    <source>
        <strain>ATCC 29342 / M129 / Subtype 1</strain>
    </source>
</reference>
<organism>
    <name type="scientific">Mycoplasma pneumoniae (strain ATCC 29342 / M129 / Subtype 1)</name>
    <name type="common">Mycoplasmoides pneumoniae</name>
    <dbReference type="NCBI Taxonomy" id="272634"/>
    <lineage>
        <taxon>Bacteria</taxon>
        <taxon>Bacillati</taxon>
        <taxon>Mycoplasmatota</taxon>
        <taxon>Mycoplasmoidales</taxon>
        <taxon>Mycoplasmoidaceae</taxon>
        <taxon>Mycoplasmoides</taxon>
    </lineage>
</organism>
<proteinExistence type="inferred from homology"/>
<gene>
    <name evidence="1" type="primary">groES</name>
    <name evidence="1" type="synonym">groS</name>
    <name type="synonym">mopB</name>
    <name type="ordered locus">MPN_574</name>
    <name type="ORF">MP268</name>
</gene>
<sequence length="116" mass="12618">MKITPIHDNILVSLVESNKEEVSQKGIITALANPDKNESAHKGTVVALGAGPAYGKSEKPKYAFGIGDTIYFKEYSGISFEEEGTKYKIISLEDVLAFEKHGNTKTTTVKKGAKKK</sequence>
<dbReference type="EMBL" id="U00089">
    <property type="protein sequence ID" value="AAB95916.1"/>
    <property type="molecule type" value="Genomic_DNA"/>
</dbReference>
<dbReference type="PIR" id="S73594">
    <property type="entry name" value="S73594"/>
</dbReference>
<dbReference type="RefSeq" id="NP_110263.1">
    <property type="nucleotide sequence ID" value="NC_000912.1"/>
</dbReference>
<dbReference type="RefSeq" id="WP_010874931.1">
    <property type="nucleotide sequence ID" value="NZ_OU342337.1"/>
</dbReference>
<dbReference type="SMR" id="P75205"/>
<dbReference type="IntAct" id="P75205">
    <property type="interactions" value="4"/>
</dbReference>
<dbReference type="STRING" id="272634.MPN_574"/>
<dbReference type="EnsemblBacteria" id="AAB95916">
    <property type="protein sequence ID" value="AAB95916"/>
    <property type="gene ID" value="MPN_574"/>
</dbReference>
<dbReference type="GeneID" id="66608743"/>
<dbReference type="KEGG" id="mpn:MPN_574"/>
<dbReference type="PATRIC" id="fig|272634.6.peg.636"/>
<dbReference type="HOGENOM" id="CLU_132825_2_2_14"/>
<dbReference type="OrthoDB" id="9806791at2"/>
<dbReference type="BioCyc" id="MPNE272634:G1GJ3-939-MONOMER"/>
<dbReference type="Proteomes" id="UP000000808">
    <property type="component" value="Chromosome"/>
</dbReference>
<dbReference type="GO" id="GO:0005737">
    <property type="term" value="C:cytoplasm"/>
    <property type="evidence" value="ECO:0007669"/>
    <property type="project" value="UniProtKB-SubCell"/>
</dbReference>
<dbReference type="GO" id="GO:0005524">
    <property type="term" value="F:ATP binding"/>
    <property type="evidence" value="ECO:0007669"/>
    <property type="project" value="InterPro"/>
</dbReference>
<dbReference type="GO" id="GO:0044183">
    <property type="term" value="F:protein folding chaperone"/>
    <property type="evidence" value="ECO:0007669"/>
    <property type="project" value="InterPro"/>
</dbReference>
<dbReference type="CDD" id="cd00320">
    <property type="entry name" value="cpn10"/>
    <property type="match status" value="1"/>
</dbReference>
<dbReference type="Gene3D" id="2.30.33.40">
    <property type="entry name" value="GroES chaperonin"/>
    <property type="match status" value="1"/>
</dbReference>
<dbReference type="HAMAP" id="MF_00580">
    <property type="entry name" value="CH10"/>
    <property type="match status" value="1"/>
</dbReference>
<dbReference type="InterPro" id="IPR020818">
    <property type="entry name" value="Chaperonin_GroES"/>
</dbReference>
<dbReference type="InterPro" id="IPR037124">
    <property type="entry name" value="Chaperonin_GroES_sf"/>
</dbReference>
<dbReference type="InterPro" id="IPR011032">
    <property type="entry name" value="GroES-like_sf"/>
</dbReference>
<dbReference type="NCBIfam" id="NF001536">
    <property type="entry name" value="PRK00364.3-2"/>
    <property type="match status" value="1"/>
</dbReference>
<dbReference type="Pfam" id="PF00166">
    <property type="entry name" value="Cpn10"/>
    <property type="match status" value="1"/>
</dbReference>
<dbReference type="PRINTS" id="PR00297">
    <property type="entry name" value="CHAPERONIN10"/>
</dbReference>
<dbReference type="SMART" id="SM00883">
    <property type="entry name" value="Cpn10"/>
    <property type="match status" value="1"/>
</dbReference>
<dbReference type="SUPFAM" id="SSF50129">
    <property type="entry name" value="GroES-like"/>
    <property type="match status" value="1"/>
</dbReference>
<name>CH10_MYCPN</name>
<evidence type="ECO:0000255" key="1">
    <source>
        <dbReference type="HAMAP-Rule" id="MF_00580"/>
    </source>
</evidence>
<evidence type="ECO:0000305" key="2"/>
<protein>
    <recommendedName>
        <fullName evidence="1">Co-chaperonin GroES</fullName>
    </recommendedName>
    <alternativeName>
        <fullName evidence="1">10 kDa chaperonin</fullName>
    </alternativeName>
    <alternativeName>
        <fullName evidence="1">Chaperonin-10</fullName>
        <shortName evidence="1">Cpn10</shortName>
    </alternativeName>
</protein>
<feature type="chain" id="PRO_0000174790" description="Co-chaperonin GroES">
    <location>
        <begin position="1"/>
        <end position="116"/>
    </location>
</feature>
<keyword id="KW-0143">Chaperone</keyword>
<keyword id="KW-0963">Cytoplasm</keyword>
<keyword id="KW-1185">Reference proteome</keyword>
<accession>P75205</accession>
<comment type="function">
    <text evidence="1">Together with the chaperonin GroEL, plays an essential role in assisting protein folding. The GroEL-GroES system forms a nano-cage that allows encapsulation of the non-native substrate proteins and provides a physical environment optimized to promote and accelerate protein folding. GroES binds to the apical surface of the GroEL ring, thereby capping the opening of the GroEL channel.</text>
</comment>
<comment type="subunit">
    <text evidence="1">Heptamer of 7 subunits arranged in a ring. Interacts with the chaperonin GroEL.</text>
</comment>
<comment type="subcellular location">
    <subcellularLocation>
        <location evidence="1">Cytoplasm</location>
    </subcellularLocation>
</comment>
<comment type="similarity">
    <text evidence="1 2">Belongs to the GroES chaperonin family.</text>
</comment>